<sequence>MSNQDFYATLGVARTATDDEIKKAYRKLAMKYHPDRNPDNKEAEEKFKEVQKAYETLSDKEKRAMYDQYGHAAFEGGGQGGFGGFGGFGGAQGFDFGDIFSQMFGGGSGRAQPDYQGEDVQVGIEITLEEAAKGVKKRINIPTYEACDVCNGSGAKPGTSPETCPTCKGSGTVHIQQAIFRMQQTCPTCHGAGKHIKEPCVKCRGAGRNKAVKTVEVNIPAGIDDGQRIRLSGEGGPGMHGAPAGDLYVTVRIRAHKIFQRDGLDLHCELPISFATAALGGELEVPTLDGKVKLTVPKETQTGRRMRVKGKGVKSLRSSATGDLYCHIVVETPVNLTDRQKELLEEFERISTGLENQTPRKKSFLDKLRDLFD</sequence>
<proteinExistence type="inferred from homology"/>
<protein>
    <recommendedName>
        <fullName evidence="1">Chaperone protein DnaJ</fullName>
    </recommendedName>
</protein>
<gene>
    <name evidence="1" type="primary">dnaJ</name>
    <name type="ordered locus">NMA0209</name>
</gene>
<dbReference type="EMBL" id="AL157959">
    <property type="protein sequence ID" value="CAM07522.1"/>
    <property type="molecule type" value="Genomic_DNA"/>
</dbReference>
<dbReference type="RefSeq" id="WP_002215274.1">
    <property type="nucleotide sequence ID" value="NC_003116.1"/>
</dbReference>
<dbReference type="SMR" id="P63968"/>
<dbReference type="EnsemblBacteria" id="CAM07522">
    <property type="protein sequence ID" value="CAM07522"/>
    <property type="gene ID" value="NMA0209"/>
</dbReference>
<dbReference type="GeneID" id="93387140"/>
<dbReference type="KEGG" id="nma:NMA0209"/>
<dbReference type="HOGENOM" id="CLU_017633_0_7_4"/>
<dbReference type="Proteomes" id="UP000000626">
    <property type="component" value="Chromosome"/>
</dbReference>
<dbReference type="GO" id="GO:0005737">
    <property type="term" value="C:cytoplasm"/>
    <property type="evidence" value="ECO:0007669"/>
    <property type="project" value="UniProtKB-SubCell"/>
</dbReference>
<dbReference type="GO" id="GO:0005524">
    <property type="term" value="F:ATP binding"/>
    <property type="evidence" value="ECO:0007669"/>
    <property type="project" value="InterPro"/>
</dbReference>
<dbReference type="GO" id="GO:0031072">
    <property type="term" value="F:heat shock protein binding"/>
    <property type="evidence" value="ECO:0007669"/>
    <property type="project" value="InterPro"/>
</dbReference>
<dbReference type="GO" id="GO:0051082">
    <property type="term" value="F:unfolded protein binding"/>
    <property type="evidence" value="ECO:0007669"/>
    <property type="project" value="UniProtKB-UniRule"/>
</dbReference>
<dbReference type="GO" id="GO:0008270">
    <property type="term" value="F:zinc ion binding"/>
    <property type="evidence" value="ECO:0007669"/>
    <property type="project" value="UniProtKB-UniRule"/>
</dbReference>
<dbReference type="GO" id="GO:0051085">
    <property type="term" value="P:chaperone cofactor-dependent protein refolding"/>
    <property type="evidence" value="ECO:0007669"/>
    <property type="project" value="TreeGrafter"/>
</dbReference>
<dbReference type="GO" id="GO:0006260">
    <property type="term" value="P:DNA replication"/>
    <property type="evidence" value="ECO:0007669"/>
    <property type="project" value="UniProtKB-KW"/>
</dbReference>
<dbReference type="GO" id="GO:0042026">
    <property type="term" value="P:protein refolding"/>
    <property type="evidence" value="ECO:0007669"/>
    <property type="project" value="TreeGrafter"/>
</dbReference>
<dbReference type="GO" id="GO:0009408">
    <property type="term" value="P:response to heat"/>
    <property type="evidence" value="ECO:0007669"/>
    <property type="project" value="InterPro"/>
</dbReference>
<dbReference type="CDD" id="cd06257">
    <property type="entry name" value="DnaJ"/>
    <property type="match status" value="1"/>
</dbReference>
<dbReference type="CDD" id="cd10747">
    <property type="entry name" value="DnaJ_C"/>
    <property type="match status" value="1"/>
</dbReference>
<dbReference type="CDD" id="cd10719">
    <property type="entry name" value="DnaJ_zf"/>
    <property type="match status" value="1"/>
</dbReference>
<dbReference type="FunFam" id="1.10.287.110:FF:000099">
    <property type="entry name" value="Chaperone protein DnaJ"/>
    <property type="match status" value="1"/>
</dbReference>
<dbReference type="FunFam" id="2.10.230.10:FF:000002">
    <property type="entry name" value="Molecular chaperone DnaJ"/>
    <property type="match status" value="1"/>
</dbReference>
<dbReference type="FunFam" id="2.60.260.20:FF:000004">
    <property type="entry name" value="Molecular chaperone DnaJ"/>
    <property type="match status" value="1"/>
</dbReference>
<dbReference type="Gene3D" id="1.10.287.110">
    <property type="entry name" value="DnaJ domain"/>
    <property type="match status" value="1"/>
</dbReference>
<dbReference type="Gene3D" id="2.10.230.10">
    <property type="entry name" value="Heat shock protein DnaJ, cysteine-rich domain"/>
    <property type="match status" value="1"/>
</dbReference>
<dbReference type="Gene3D" id="2.60.260.20">
    <property type="entry name" value="Urease metallochaperone UreE, N-terminal domain"/>
    <property type="match status" value="2"/>
</dbReference>
<dbReference type="HAMAP" id="MF_01152">
    <property type="entry name" value="DnaJ"/>
    <property type="match status" value="1"/>
</dbReference>
<dbReference type="InterPro" id="IPR012724">
    <property type="entry name" value="DnaJ"/>
</dbReference>
<dbReference type="InterPro" id="IPR002939">
    <property type="entry name" value="DnaJ_C"/>
</dbReference>
<dbReference type="InterPro" id="IPR001623">
    <property type="entry name" value="DnaJ_domain"/>
</dbReference>
<dbReference type="InterPro" id="IPR018253">
    <property type="entry name" value="DnaJ_domain_CS"/>
</dbReference>
<dbReference type="InterPro" id="IPR008971">
    <property type="entry name" value="HSP40/DnaJ_pept-bd"/>
</dbReference>
<dbReference type="InterPro" id="IPR001305">
    <property type="entry name" value="HSP_DnaJ_Cys-rich_dom"/>
</dbReference>
<dbReference type="InterPro" id="IPR036410">
    <property type="entry name" value="HSP_DnaJ_Cys-rich_dom_sf"/>
</dbReference>
<dbReference type="InterPro" id="IPR036869">
    <property type="entry name" value="J_dom_sf"/>
</dbReference>
<dbReference type="NCBIfam" id="TIGR02349">
    <property type="entry name" value="DnaJ_bact"/>
    <property type="match status" value="1"/>
</dbReference>
<dbReference type="NCBIfam" id="NF008035">
    <property type="entry name" value="PRK10767.1"/>
    <property type="match status" value="1"/>
</dbReference>
<dbReference type="PANTHER" id="PTHR43096:SF48">
    <property type="entry name" value="CHAPERONE PROTEIN DNAJ"/>
    <property type="match status" value="1"/>
</dbReference>
<dbReference type="PANTHER" id="PTHR43096">
    <property type="entry name" value="DNAJ HOMOLOG 1, MITOCHONDRIAL-RELATED"/>
    <property type="match status" value="1"/>
</dbReference>
<dbReference type="Pfam" id="PF00226">
    <property type="entry name" value="DnaJ"/>
    <property type="match status" value="1"/>
</dbReference>
<dbReference type="Pfam" id="PF01556">
    <property type="entry name" value="DnaJ_C"/>
    <property type="match status" value="1"/>
</dbReference>
<dbReference type="Pfam" id="PF00684">
    <property type="entry name" value="DnaJ_CXXCXGXG"/>
    <property type="match status" value="1"/>
</dbReference>
<dbReference type="PRINTS" id="PR00625">
    <property type="entry name" value="JDOMAIN"/>
</dbReference>
<dbReference type="SMART" id="SM00271">
    <property type="entry name" value="DnaJ"/>
    <property type="match status" value="1"/>
</dbReference>
<dbReference type="SUPFAM" id="SSF46565">
    <property type="entry name" value="Chaperone J-domain"/>
    <property type="match status" value="1"/>
</dbReference>
<dbReference type="SUPFAM" id="SSF57938">
    <property type="entry name" value="DnaJ/Hsp40 cysteine-rich domain"/>
    <property type="match status" value="1"/>
</dbReference>
<dbReference type="SUPFAM" id="SSF49493">
    <property type="entry name" value="HSP40/DnaJ peptide-binding domain"/>
    <property type="match status" value="2"/>
</dbReference>
<dbReference type="PROSITE" id="PS00636">
    <property type="entry name" value="DNAJ_1"/>
    <property type="match status" value="1"/>
</dbReference>
<dbReference type="PROSITE" id="PS50076">
    <property type="entry name" value="DNAJ_2"/>
    <property type="match status" value="1"/>
</dbReference>
<dbReference type="PROSITE" id="PS51188">
    <property type="entry name" value="ZF_CR"/>
    <property type="match status" value="1"/>
</dbReference>
<comment type="function">
    <text evidence="1">Participates actively in the response to hyperosmotic and heat shock by preventing the aggregation of stress-denatured proteins and by disaggregating proteins, also in an autonomous, DnaK-independent fashion. Unfolded proteins bind initially to DnaJ; upon interaction with the DnaJ-bound protein, DnaK hydrolyzes its bound ATP, resulting in the formation of a stable complex. GrpE releases ADP from DnaK; ATP binding to DnaK triggers the release of the substrate protein, thus completing the reaction cycle. Several rounds of ATP-dependent interactions between DnaJ, DnaK and GrpE are required for fully efficient folding. Also involved, together with DnaK and GrpE, in the DNA replication of plasmids through activation of initiation proteins.</text>
</comment>
<comment type="cofactor">
    <cofactor evidence="1">
        <name>Zn(2+)</name>
        <dbReference type="ChEBI" id="CHEBI:29105"/>
    </cofactor>
    <text evidence="1">Binds 2 Zn(2+) ions per monomer.</text>
</comment>
<comment type="subunit">
    <text evidence="1">Homodimer.</text>
</comment>
<comment type="subcellular location">
    <subcellularLocation>
        <location evidence="1">Cytoplasm</location>
    </subcellularLocation>
</comment>
<comment type="domain">
    <text evidence="1">The J domain is necessary and sufficient to stimulate DnaK ATPase activity. Zinc center 1 plays an important role in the autonomous, DnaK-independent chaperone activity of DnaJ. Zinc center 2 is essential for interaction with DnaK and for DnaJ activity.</text>
</comment>
<comment type="similarity">
    <text evidence="1">Belongs to the DnaJ family.</text>
</comment>
<accession>P63968</accession>
<accession>A1IP63</accession>
<accession>P57107</accession>
<reference key="1">
    <citation type="journal article" date="2000" name="Nature">
        <title>Complete DNA sequence of a serogroup A strain of Neisseria meningitidis Z2491.</title>
        <authorList>
            <person name="Parkhill J."/>
            <person name="Achtman M."/>
            <person name="James K.D."/>
            <person name="Bentley S.D."/>
            <person name="Churcher C.M."/>
            <person name="Klee S.R."/>
            <person name="Morelli G."/>
            <person name="Basham D."/>
            <person name="Brown D."/>
            <person name="Chillingworth T."/>
            <person name="Davies R.M."/>
            <person name="Davis P."/>
            <person name="Devlin K."/>
            <person name="Feltwell T."/>
            <person name="Hamlin N."/>
            <person name="Holroyd S."/>
            <person name="Jagels K."/>
            <person name="Leather S."/>
            <person name="Moule S."/>
            <person name="Mungall K.L."/>
            <person name="Quail M.A."/>
            <person name="Rajandream M.A."/>
            <person name="Rutherford K.M."/>
            <person name="Simmonds M."/>
            <person name="Skelton J."/>
            <person name="Whitehead S."/>
            <person name="Spratt B.G."/>
            <person name="Barrell B.G."/>
        </authorList>
    </citation>
    <scope>NUCLEOTIDE SEQUENCE [LARGE SCALE GENOMIC DNA]</scope>
    <source>
        <strain>DSM 15465 / Z2491</strain>
    </source>
</reference>
<name>DNAJ_NEIMA</name>
<feature type="chain" id="PRO_0000070839" description="Chaperone protein DnaJ">
    <location>
        <begin position="1"/>
        <end position="373"/>
    </location>
</feature>
<feature type="domain" description="J" evidence="1">
    <location>
        <begin position="5"/>
        <end position="70"/>
    </location>
</feature>
<feature type="repeat" description="CXXCXGXG motif">
    <location>
        <begin position="147"/>
        <end position="154"/>
    </location>
</feature>
<feature type="repeat" description="CXXCXGXG motif">
    <location>
        <begin position="164"/>
        <end position="171"/>
    </location>
</feature>
<feature type="repeat" description="CXXCXGXG motif">
    <location>
        <begin position="186"/>
        <end position="193"/>
    </location>
</feature>
<feature type="repeat" description="CXXCXGXG motif">
    <location>
        <begin position="200"/>
        <end position="207"/>
    </location>
</feature>
<feature type="zinc finger region" description="CR-type" evidence="1">
    <location>
        <begin position="134"/>
        <end position="212"/>
    </location>
</feature>
<feature type="binding site" evidence="1">
    <location>
        <position position="147"/>
    </location>
    <ligand>
        <name>Zn(2+)</name>
        <dbReference type="ChEBI" id="CHEBI:29105"/>
        <label>1</label>
    </ligand>
</feature>
<feature type="binding site" evidence="1">
    <location>
        <position position="150"/>
    </location>
    <ligand>
        <name>Zn(2+)</name>
        <dbReference type="ChEBI" id="CHEBI:29105"/>
        <label>1</label>
    </ligand>
</feature>
<feature type="binding site" evidence="1">
    <location>
        <position position="164"/>
    </location>
    <ligand>
        <name>Zn(2+)</name>
        <dbReference type="ChEBI" id="CHEBI:29105"/>
        <label>2</label>
    </ligand>
</feature>
<feature type="binding site" evidence="1">
    <location>
        <position position="167"/>
    </location>
    <ligand>
        <name>Zn(2+)</name>
        <dbReference type="ChEBI" id="CHEBI:29105"/>
        <label>2</label>
    </ligand>
</feature>
<feature type="binding site" evidence="1">
    <location>
        <position position="186"/>
    </location>
    <ligand>
        <name>Zn(2+)</name>
        <dbReference type="ChEBI" id="CHEBI:29105"/>
        <label>2</label>
    </ligand>
</feature>
<feature type="binding site" evidence="1">
    <location>
        <position position="189"/>
    </location>
    <ligand>
        <name>Zn(2+)</name>
        <dbReference type="ChEBI" id="CHEBI:29105"/>
        <label>2</label>
    </ligand>
</feature>
<feature type="binding site" evidence="1">
    <location>
        <position position="200"/>
    </location>
    <ligand>
        <name>Zn(2+)</name>
        <dbReference type="ChEBI" id="CHEBI:29105"/>
        <label>1</label>
    </ligand>
</feature>
<feature type="binding site" evidence="1">
    <location>
        <position position="203"/>
    </location>
    <ligand>
        <name>Zn(2+)</name>
        <dbReference type="ChEBI" id="CHEBI:29105"/>
        <label>1</label>
    </ligand>
</feature>
<evidence type="ECO:0000255" key="1">
    <source>
        <dbReference type="HAMAP-Rule" id="MF_01152"/>
    </source>
</evidence>
<organism>
    <name type="scientific">Neisseria meningitidis serogroup A / serotype 4A (strain DSM 15465 / Z2491)</name>
    <dbReference type="NCBI Taxonomy" id="122587"/>
    <lineage>
        <taxon>Bacteria</taxon>
        <taxon>Pseudomonadati</taxon>
        <taxon>Pseudomonadota</taxon>
        <taxon>Betaproteobacteria</taxon>
        <taxon>Neisseriales</taxon>
        <taxon>Neisseriaceae</taxon>
        <taxon>Neisseria</taxon>
    </lineage>
</organism>
<keyword id="KW-0143">Chaperone</keyword>
<keyword id="KW-0963">Cytoplasm</keyword>
<keyword id="KW-0235">DNA replication</keyword>
<keyword id="KW-0479">Metal-binding</keyword>
<keyword id="KW-0677">Repeat</keyword>
<keyword id="KW-0346">Stress response</keyword>
<keyword id="KW-0862">Zinc</keyword>
<keyword id="KW-0863">Zinc-finger</keyword>